<evidence type="ECO:0000255" key="1">
    <source>
        <dbReference type="HAMAP-Rule" id="MF_01419"/>
    </source>
</evidence>
<gene>
    <name type="ordered locus">MTH_1071</name>
</gene>
<sequence length="221" mass="23785">MRAIAVDIDGTITDKKRRLSLEAVKALRGAEEAGVPVIMVTGNILCFAMATSVLIGASGGVVAENGGVLHINDEVRVLGDISKAEMAYSHLKGIYPVRKVQFSDLRVSEIALTRDVPADTVREALRDFDVEVYDTGFAIHLTDPSVNKGSSLEILLESMGIEMEDVMAIGDSENDLEFIEAAGFRVAVANADPELREMADYVTSAAHGEGVAEAVRRFMGW</sequence>
<comment type="function">
    <text evidence="1">Catalyzes the dephosphorylation of 2-phosphoglycolate.</text>
</comment>
<comment type="catalytic activity">
    <reaction evidence="1">
        <text>2-phosphoglycolate + H2O = glycolate + phosphate</text>
        <dbReference type="Rhea" id="RHEA:14369"/>
        <dbReference type="ChEBI" id="CHEBI:15377"/>
        <dbReference type="ChEBI" id="CHEBI:29805"/>
        <dbReference type="ChEBI" id="CHEBI:43474"/>
        <dbReference type="ChEBI" id="CHEBI:58033"/>
        <dbReference type="EC" id="3.1.3.18"/>
    </reaction>
</comment>
<comment type="cofactor">
    <cofactor evidence="1">
        <name>Mg(2+)</name>
        <dbReference type="ChEBI" id="CHEBI:18420"/>
    </cofactor>
</comment>
<comment type="similarity">
    <text evidence="1">Belongs to the archaeal SPP-like hydrolase family.</text>
</comment>
<dbReference type="EC" id="3.1.3.18" evidence="1"/>
<dbReference type="EMBL" id="AE000666">
    <property type="protein sequence ID" value="AAB85560.1"/>
    <property type="molecule type" value="Genomic_DNA"/>
</dbReference>
<dbReference type="PIR" id="C69009">
    <property type="entry name" value="C69009"/>
</dbReference>
<dbReference type="RefSeq" id="WP_010876695.1">
    <property type="nucleotide sequence ID" value="NC_000916.1"/>
</dbReference>
<dbReference type="SMR" id="O27143"/>
<dbReference type="STRING" id="187420.MTH_1071"/>
<dbReference type="PaxDb" id="187420-MTH_1071"/>
<dbReference type="EnsemblBacteria" id="AAB85560">
    <property type="protein sequence ID" value="AAB85560"/>
    <property type="gene ID" value="MTH_1071"/>
</dbReference>
<dbReference type="GeneID" id="1471479"/>
<dbReference type="KEGG" id="mth:MTH_1071"/>
<dbReference type="PATRIC" id="fig|187420.15.peg.1048"/>
<dbReference type="HOGENOM" id="CLU_044146_2_0_2"/>
<dbReference type="InParanoid" id="O27143"/>
<dbReference type="Proteomes" id="UP000005223">
    <property type="component" value="Chromosome"/>
</dbReference>
<dbReference type="GO" id="GO:0005829">
    <property type="term" value="C:cytosol"/>
    <property type="evidence" value="ECO:0007669"/>
    <property type="project" value="TreeGrafter"/>
</dbReference>
<dbReference type="GO" id="GO:0000287">
    <property type="term" value="F:magnesium ion binding"/>
    <property type="evidence" value="ECO:0007669"/>
    <property type="project" value="InterPro"/>
</dbReference>
<dbReference type="GO" id="GO:0008967">
    <property type="term" value="F:phosphoglycolate phosphatase activity"/>
    <property type="evidence" value="ECO:0007669"/>
    <property type="project" value="UniProtKB-UniRule"/>
</dbReference>
<dbReference type="CDD" id="cd07514">
    <property type="entry name" value="HAD_Pase"/>
    <property type="match status" value="1"/>
</dbReference>
<dbReference type="Gene3D" id="3.90.1070.10">
    <property type="match status" value="1"/>
</dbReference>
<dbReference type="Gene3D" id="3.40.50.1000">
    <property type="entry name" value="HAD superfamily/HAD-like"/>
    <property type="match status" value="1"/>
</dbReference>
<dbReference type="HAMAP" id="MF_01419">
    <property type="entry name" value="GPH_hydrolase_arch"/>
    <property type="match status" value="1"/>
</dbReference>
<dbReference type="InterPro" id="IPR036412">
    <property type="entry name" value="HAD-like_sf"/>
</dbReference>
<dbReference type="InterPro" id="IPR006379">
    <property type="entry name" value="HAD-SF_hydro_IIB"/>
</dbReference>
<dbReference type="InterPro" id="IPR023214">
    <property type="entry name" value="HAD_sf"/>
</dbReference>
<dbReference type="InterPro" id="IPR006382">
    <property type="entry name" value="PGPase"/>
</dbReference>
<dbReference type="NCBIfam" id="TIGR01484">
    <property type="entry name" value="HAD-SF-IIB"/>
    <property type="match status" value="1"/>
</dbReference>
<dbReference type="NCBIfam" id="TIGR01487">
    <property type="entry name" value="Pglycolate_arch"/>
    <property type="match status" value="1"/>
</dbReference>
<dbReference type="NCBIfam" id="NF002245">
    <property type="entry name" value="PRK01158.1"/>
    <property type="match status" value="1"/>
</dbReference>
<dbReference type="NCBIfam" id="TIGR01482">
    <property type="entry name" value="SPP-subfamily"/>
    <property type="match status" value="1"/>
</dbReference>
<dbReference type="PANTHER" id="PTHR10000:SF8">
    <property type="entry name" value="HAD SUPERFAMILY HYDROLASE-LIKE, TYPE 3"/>
    <property type="match status" value="1"/>
</dbReference>
<dbReference type="PANTHER" id="PTHR10000">
    <property type="entry name" value="PHOSPHOSERINE PHOSPHATASE"/>
    <property type="match status" value="1"/>
</dbReference>
<dbReference type="Pfam" id="PF08282">
    <property type="entry name" value="Hydrolase_3"/>
    <property type="match status" value="2"/>
</dbReference>
<dbReference type="SFLD" id="SFLDG01144">
    <property type="entry name" value="C2.B.4:_PGP_Like"/>
    <property type="match status" value="1"/>
</dbReference>
<dbReference type="SFLD" id="SFLDF00446">
    <property type="entry name" value="phosphoglycolate_phosphatase_3"/>
    <property type="match status" value="1"/>
</dbReference>
<dbReference type="SUPFAM" id="SSF56784">
    <property type="entry name" value="HAD-like"/>
    <property type="match status" value="1"/>
</dbReference>
<organism>
    <name type="scientific">Methanothermobacter thermautotrophicus (strain ATCC 29096 / DSM 1053 / JCM 10044 / NBRC 100330 / Delta H)</name>
    <name type="common">Methanobacterium thermoautotrophicum</name>
    <dbReference type="NCBI Taxonomy" id="187420"/>
    <lineage>
        <taxon>Archaea</taxon>
        <taxon>Methanobacteriati</taxon>
        <taxon>Methanobacteriota</taxon>
        <taxon>Methanomada group</taxon>
        <taxon>Methanobacteria</taxon>
        <taxon>Methanobacteriales</taxon>
        <taxon>Methanobacteriaceae</taxon>
        <taxon>Methanothermobacter</taxon>
    </lineage>
</organism>
<accession>O27143</accession>
<feature type="chain" id="PRO_0000146720" description="Phosphoglycolate phosphatase">
    <location>
        <begin position="1"/>
        <end position="221"/>
    </location>
</feature>
<feature type="active site" description="Nucleophile" evidence="1">
    <location>
        <position position="7"/>
    </location>
</feature>
<feature type="binding site" evidence="1">
    <location>
        <position position="7"/>
    </location>
    <ligand>
        <name>Mg(2+)</name>
        <dbReference type="ChEBI" id="CHEBI:18420"/>
    </ligand>
</feature>
<feature type="binding site" evidence="1">
    <location>
        <position position="9"/>
    </location>
    <ligand>
        <name>Mg(2+)</name>
        <dbReference type="ChEBI" id="CHEBI:18420"/>
    </ligand>
</feature>
<feature type="binding site" evidence="1">
    <location>
        <position position="148"/>
    </location>
    <ligand>
        <name>substrate</name>
    </ligand>
</feature>
<feature type="binding site" evidence="1">
    <location>
        <position position="171"/>
    </location>
    <ligand>
        <name>Mg(2+)</name>
        <dbReference type="ChEBI" id="CHEBI:18420"/>
    </ligand>
</feature>
<feature type="binding site" evidence="1">
    <location>
        <position position="175"/>
    </location>
    <ligand>
        <name>Mg(2+)</name>
        <dbReference type="ChEBI" id="CHEBI:18420"/>
    </ligand>
</feature>
<protein>
    <recommendedName>
        <fullName evidence="1">Phosphoglycolate phosphatase</fullName>
        <shortName evidence="1">PGP</shortName>
        <shortName evidence="1">PGPase</shortName>
        <ecNumber evidence="1">3.1.3.18</ecNumber>
    </recommendedName>
</protein>
<keyword id="KW-0119">Carbohydrate metabolism</keyword>
<keyword id="KW-0378">Hydrolase</keyword>
<keyword id="KW-0460">Magnesium</keyword>
<keyword id="KW-0479">Metal-binding</keyword>
<keyword id="KW-1185">Reference proteome</keyword>
<name>PGP_METTH</name>
<reference key="1">
    <citation type="journal article" date="1997" name="J. Bacteriol.">
        <title>Complete genome sequence of Methanobacterium thermoautotrophicum deltaH: functional analysis and comparative genomics.</title>
        <authorList>
            <person name="Smith D.R."/>
            <person name="Doucette-Stamm L.A."/>
            <person name="Deloughery C."/>
            <person name="Lee H.-M."/>
            <person name="Dubois J."/>
            <person name="Aldredge T."/>
            <person name="Bashirzadeh R."/>
            <person name="Blakely D."/>
            <person name="Cook R."/>
            <person name="Gilbert K."/>
            <person name="Harrison D."/>
            <person name="Hoang L."/>
            <person name="Keagle P."/>
            <person name="Lumm W."/>
            <person name="Pothier B."/>
            <person name="Qiu D."/>
            <person name="Spadafora R."/>
            <person name="Vicare R."/>
            <person name="Wang Y."/>
            <person name="Wierzbowski J."/>
            <person name="Gibson R."/>
            <person name="Jiwani N."/>
            <person name="Caruso A."/>
            <person name="Bush D."/>
            <person name="Safer H."/>
            <person name="Patwell D."/>
            <person name="Prabhakar S."/>
            <person name="McDougall S."/>
            <person name="Shimer G."/>
            <person name="Goyal A."/>
            <person name="Pietrovski S."/>
            <person name="Church G.M."/>
            <person name="Daniels C.J."/>
            <person name="Mao J.-I."/>
            <person name="Rice P."/>
            <person name="Noelling J."/>
            <person name="Reeve J.N."/>
        </authorList>
    </citation>
    <scope>NUCLEOTIDE SEQUENCE [LARGE SCALE GENOMIC DNA]</scope>
    <source>
        <strain>ATCC 29096 / DSM 1053 / JCM 10044 / NBRC 100330 / Delta H</strain>
    </source>
</reference>
<proteinExistence type="inferred from homology"/>